<accession>Q5ZIZ4</accession>
<reference key="1">
    <citation type="journal article" date="2005" name="Genome Biol.">
        <title>Full-length cDNAs from chicken bursal lymphocytes to facilitate gene function analysis.</title>
        <authorList>
            <person name="Caldwell R.B."/>
            <person name="Kierzek A.M."/>
            <person name="Arakawa H."/>
            <person name="Bezzubov Y."/>
            <person name="Zaim J."/>
            <person name="Fiedler P."/>
            <person name="Kutter S."/>
            <person name="Blagodatski A."/>
            <person name="Kostovska D."/>
            <person name="Koter M."/>
            <person name="Plachy J."/>
            <person name="Carninci P."/>
            <person name="Hayashizaki Y."/>
            <person name="Buerstedde J.-M."/>
        </authorList>
    </citation>
    <scope>NUCLEOTIDE SEQUENCE [LARGE SCALE MRNA]</scope>
    <source>
        <strain>CB</strain>
        <tissue>Bursa of Fabricius</tissue>
    </source>
</reference>
<reference key="2">
    <citation type="journal article" date="1967" name="Biochim. Biophys. Acta">
        <title>5'-nucleotidase of chicken liver.</title>
        <authorList>
            <person name="Itoh R."/>
            <person name="Mitsui A."/>
            <person name="Tsushima K."/>
        </authorList>
    </citation>
    <scope>FUNCTION</scope>
    <scope>CATALYTIC ACTIVITY</scope>
    <scope>BIOPHYSICOCHEMICAL PROPERTIES</scope>
    <scope>COFACTOR</scope>
    <scope>ACTIVITY REGULATION</scope>
    <scope>SUBSTRATE SPECIFICITY</scope>
</reference>
<organism>
    <name type="scientific">Gallus gallus</name>
    <name type="common">Chicken</name>
    <dbReference type="NCBI Taxonomy" id="9031"/>
    <lineage>
        <taxon>Eukaryota</taxon>
        <taxon>Metazoa</taxon>
        <taxon>Chordata</taxon>
        <taxon>Craniata</taxon>
        <taxon>Vertebrata</taxon>
        <taxon>Euteleostomi</taxon>
        <taxon>Archelosauria</taxon>
        <taxon>Archosauria</taxon>
        <taxon>Dinosauria</taxon>
        <taxon>Saurischia</taxon>
        <taxon>Theropoda</taxon>
        <taxon>Coelurosauria</taxon>
        <taxon>Aves</taxon>
        <taxon>Neognathae</taxon>
        <taxon>Galloanserae</taxon>
        <taxon>Galliformes</taxon>
        <taxon>Phasianidae</taxon>
        <taxon>Phasianinae</taxon>
        <taxon>Gallus</taxon>
    </lineage>
</organism>
<dbReference type="EC" id="3.1.3.5" evidence="4"/>
<dbReference type="EC" id="3.1.3.99" evidence="4"/>
<dbReference type="EC" id="2.7.1.77" evidence="2"/>
<dbReference type="EMBL" id="AJ720640">
    <property type="protein sequence ID" value="CAG32299.1"/>
    <property type="molecule type" value="mRNA"/>
</dbReference>
<dbReference type="RefSeq" id="NP_001026405.1">
    <property type="nucleotide sequence ID" value="NM_001031234.1"/>
</dbReference>
<dbReference type="SMR" id="Q5ZIZ4"/>
<dbReference type="FunCoup" id="Q5ZIZ4">
    <property type="interactions" value="796"/>
</dbReference>
<dbReference type="STRING" id="9031.ENSGALP00000013294"/>
<dbReference type="PaxDb" id="9031-ENSGALP00000013294"/>
<dbReference type="GeneID" id="423871"/>
<dbReference type="KEGG" id="gga:423871"/>
<dbReference type="CTD" id="22978"/>
<dbReference type="VEuPathDB" id="HostDB:geneid_423871"/>
<dbReference type="eggNOG" id="KOG2469">
    <property type="taxonomic scope" value="Eukaryota"/>
</dbReference>
<dbReference type="InParanoid" id="Q5ZIZ4"/>
<dbReference type="OrthoDB" id="10252832at2759"/>
<dbReference type="PhylomeDB" id="Q5ZIZ4"/>
<dbReference type="Reactome" id="R-GGA-421178">
    <property type="pathway name" value="Urate synthesis"/>
</dbReference>
<dbReference type="PRO" id="PR:Q5ZIZ4"/>
<dbReference type="Proteomes" id="UP000000539">
    <property type="component" value="Unassembled WGS sequence"/>
</dbReference>
<dbReference type="GO" id="GO:0005829">
    <property type="term" value="C:cytosol"/>
    <property type="evidence" value="ECO:0000250"/>
    <property type="project" value="UniProtKB"/>
</dbReference>
<dbReference type="GO" id="GO:0008253">
    <property type="term" value="F:5'-nucleotidase activity"/>
    <property type="evidence" value="ECO:0000314"/>
    <property type="project" value="UniProtKB"/>
</dbReference>
<dbReference type="GO" id="GO:0005524">
    <property type="term" value="F:ATP binding"/>
    <property type="evidence" value="ECO:0000250"/>
    <property type="project" value="UniProtKB"/>
</dbReference>
<dbReference type="GO" id="GO:0050484">
    <property type="term" value="F:GMP 5'-nucleotidase activity"/>
    <property type="evidence" value="ECO:0000314"/>
    <property type="project" value="UniProtKB"/>
</dbReference>
<dbReference type="GO" id="GO:0042802">
    <property type="term" value="F:identical protein binding"/>
    <property type="evidence" value="ECO:0000250"/>
    <property type="project" value="UniProtKB"/>
</dbReference>
<dbReference type="GO" id="GO:0050483">
    <property type="term" value="F:IMP 5'-nucleotidase activity"/>
    <property type="evidence" value="ECO:0000314"/>
    <property type="project" value="UniProtKB"/>
</dbReference>
<dbReference type="GO" id="GO:0046872">
    <property type="term" value="F:metal ion binding"/>
    <property type="evidence" value="ECO:0007669"/>
    <property type="project" value="UniProtKB-KW"/>
</dbReference>
<dbReference type="GO" id="GO:0050146">
    <property type="term" value="F:nucleoside phosphotransferase activity"/>
    <property type="evidence" value="ECO:0000250"/>
    <property type="project" value="UniProtKB"/>
</dbReference>
<dbReference type="GO" id="GO:0106411">
    <property type="term" value="F:XMP 5'-nucleosidase activity"/>
    <property type="evidence" value="ECO:0007669"/>
    <property type="project" value="RHEA"/>
</dbReference>
<dbReference type="GO" id="GO:0046085">
    <property type="term" value="P:adenosine metabolic process"/>
    <property type="evidence" value="ECO:0000318"/>
    <property type="project" value="GO_Central"/>
</dbReference>
<dbReference type="GO" id="GO:0046054">
    <property type="term" value="P:dGMP metabolic process"/>
    <property type="evidence" value="ECO:0000250"/>
    <property type="project" value="UniProtKB"/>
</dbReference>
<dbReference type="GO" id="GO:0046037">
    <property type="term" value="P:GMP metabolic process"/>
    <property type="evidence" value="ECO:0000314"/>
    <property type="project" value="UniProtKB"/>
</dbReference>
<dbReference type="GO" id="GO:0046040">
    <property type="term" value="P:IMP metabolic process"/>
    <property type="evidence" value="ECO:0000314"/>
    <property type="project" value="UniProtKB"/>
</dbReference>
<dbReference type="CDD" id="cd07522">
    <property type="entry name" value="HAD_cN-II"/>
    <property type="match status" value="1"/>
</dbReference>
<dbReference type="FunFam" id="3.40.50.1000:FF:000021">
    <property type="entry name" value="NT5C2 isoform 1"/>
    <property type="match status" value="1"/>
</dbReference>
<dbReference type="Gene3D" id="3.40.50.1000">
    <property type="entry name" value="HAD superfamily/HAD-like"/>
    <property type="match status" value="2"/>
</dbReference>
<dbReference type="InterPro" id="IPR036412">
    <property type="entry name" value="HAD-like_sf"/>
</dbReference>
<dbReference type="InterPro" id="IPR008380">
    <property type="entry name" value="HAD-SF_hydro_IG_5-nucl"/>
</dbReference>
<dbReference type="InterPro" id="IPR023214">
    <property type="entry name" value="HAD_sf"/>
</dbReference>
<dbReference type="InterPro" id="IPR016695">
    <property type="entry name" value="Pur_nucleotidase"/>
</dbReference>
<dbReference type="NCBIfam" id="TIGR02244">
    <property type="entry name" value="HAD-IG-Ncltidse"/>
    <property type="match status" value="1"/>
</dbReference>
<dbReference type="PANTHER" id="PTHR12103">
    <property type="entry name" value="5'-NUCLEOTIDASE DOMAIN-CONTAINING"/>
    <property type="match status" value="1"/>
</dbReference>
<dbReference type="PANTHER" id="PTHR12103:SF17">
    <property type="entry name" value="CYTOSOLIC PURINE 5'-NUCLEOTIDASE"/>
    <property type="match status" value="1"/>
</dbReference>
<dbReference type="Pfam" id="PF05761">
    <property type="entry name" value="5_nucleotid"/>
    <property type="match status" value="1"/>
</dbReference>
<dbReference type="PIRSF" id="PIRSF017434">
    <property type="entry name" value="Purine_5'-nucleotidase"/>
    <property type="match status" value="1"/>
</dbReference>
<dbReference type="SUPFAM" id="SSF56784">
    <property type="entry name" value="HAD-like"/>
    <property type="match status" value="1"/>
</dbReference>
<keyword id="KW-0021">Allosteric enzyme</keyword>
<keyword id="KW-0067">ATP-binding</keyword>
<keyword id="KW-0963">Cytoplasm</keyword>
<keyword id="KW-0378">Hydrolase</keyword>
<keyword id="KW-0460">Magnesium</keyword>
<keyword id="KW-0479">Metal-binding</keyword>
<keyword id="KW-0546">Nucleotide metabolism</keyword>
<keyword id="KW-0547">Nucleotide-binding</keyword>
<keyword id="KW-1185">Reference proteome</keyword>
<keyword id="KW-0808">Transferase</keyword>
<name>5NTC_CHICK</name>
<sequence length="569" mass="65894">MTTSWSDRLQNAADLPANMDGHALKKYRREAYHRVFVNRSLAMEKIKCFGFDMDYTLAVYKSPEYESLGFDLTVERLVSIGYPHELLNFVYDPAFPTRGLVFDTHYGNLLKVDAYGNLLVCAHGFNFLRGPETRDQYPNKFIQRDDTDRFYILNTLFNLPETYLLACLVDFFTNCDRYTSCETGFKDGDLFMSFRSMFQDVRDAVDWVHYKGSLKEKTLENLEKYVVKDGKLPLLLSRMNEVGKVFLVTNSDYKYTDKIMTYLFDFPHGPKPGSAHRPWQSYFDLILVDARKPLFFGEGTVLRQVDTVTGKLKIGTYTGPLQHGIVYSGGSSDTVCDLLGAKGKDILYIGDHIFGDILKSKKRQGWRTFLVIPELAQELHVWTDKSALFEELQSLDIFLAELYKHLDSSSNERPDISSIQRRIKKVTHDMDMCYGMMGSLFRSGSRQTLFASQVMRYADLYAASFINLLYYPFSYLFRAAHVLMPHESTVEHTHVDINEKESPMATRNRTSVDFKDSDYKRHQLTRSISEIKPPNLFPQAPQEITHCHDEDDDEEEEEEEVEEEEEEEE</sequence>
<feature type="chain" id="PRO_0000310266" description="Cytosolic purine 5'-nucleotidase">
    <location>
        <begin position="1"/>
        <end position="569"/>
    </location>
</feature>
<feature type="region of interest" description="Disordered" evidence="3">
    <location>
        <begin position="527"/>
        <end position="569"/>
    </location>
</feature>
<feature type="region of interest" description="Required for tetramer assembly" evidence="2">
    <location>
        <begin position="548"/>
        <end position="569"/>
    </location>
</feature>
<feature type="compositionally biased region" description="Acidic residues" evidence="3">
    <location>
        <begin position="550"/>
        <end position="569"/>
    </location>
</feature>
<feature type="active site" description="Nucleophile" evidence="2">
    <location>
        <position position="52"/>
    </location>
</feature>
<feature type="active site" description="Proton donor" evidence="2">
    <location>
        <position position="54"/>
    </location>
</feature>
<feature type="binding site" evidence="2">
    <location>
        <position position="52"/>
    </location>
    <ligand>
        <name>IMP</name>
        <dbReference type="ChEBI" id="CHEBI:58053"/>
    </ligand>
</feature>
<feature type="binding site" evidence="2">
    <location>
        <position position="52"/>
    </location>
    <ligand>
        <name>Mg(2+)</name>
        <dbReference type="ChEBI" id="CHEBI:18420"/>
    </ligand>
</feature>
<feature type="binding site" evidence="2">
    <location>
        <position position="54"/>
    </location>
    <ligand>
        <name>IMP</name>
        <dbReference type="ChEBI" id="CHEBI:58053"/>
    </ligand>
</feature>
<feature type="binding site" evidence="2">
    <location>
        <position position="54"/>
    </location>
    <ligand>
        <name>Mg(2+)</name>
        <dbReference type="ChEBI" id="CHEBI:18420"/>
    </ligand>
</feature>
<feature type="binding site" evidence="2">
    <location>
        <position position="144"/>
    </location>
    <ligand>
        <name>ATP</name>
        <dbReference type="ChEBI" id="CHEBI:30616"/>
        <note>allosteric activator</note>
    </ligand>
</feature>
<feature type="binding site" evidence="2">
    <location>
        <position position="154"/>
    </location>
    <ligand>
        <name>ATP</name>
        <dbReference type="ChEBI" id="CHEBI:30616"/>
        <note>allosteric activator</note>
    </ligand>
</feature>
<feature type="binding site" evidence="2">
    <location>
        <position position="202"/>
    </location>
    <ligand>
        <name>IMP</name>
        <dbReference type="ChEBI" id="CHEBI:58053"/>
    </ligand>
</feature>
<feature type="binding site" evidence="2">
    <location>
        <position position="206"/>
    </location>
    <ligand>
        <name>IMP</name>
        <dbReference type="ChEBI" id="CHEBI:58053"/>
    </ligand>
</feature>
<feature type="binding site" evidence="2">
    <location>
        <position position="215"/>
    </location>
    <ligand>
        <name>IMP</name>
        <dbReference type="ChEBI" id="CHEBI:58053"/>
    </ligand>
</feature>
<feature type="binding site" evidence="2">
    <location>
        <position position="249"/>
    </location>
    <ligand>
        <name>IMP</name>
        <dbReference type="ChEBI" id="CHEBI:58053"/>
    </ligand>
</feature>
<feature type="binding site" evidence="2">
    <location>
        <position position="250"/>
    </location>
    <ligand>
        <name>IMP</name>
        <dbReference type="ChEBI" id="CHEBI:58053"/>
    </ligand>
</feature>
<feature type="binding site" evidence="2">
    <location>
        <position position="251"/>
    </location>
    <ligand>
        <name>IMP</name>
        <dbReference type="ChEBI" id="CHEBI:58053"/>
    </ligand>
</feature>
<feature type="binding site" evidence="2">
    <location>
        <position position="292"/>
    </location>
    <ligand>
        <name>IMP</name>
        <dbReference type="ChEBI" id="CHEBI:58053"/>
    </ligand>
</feature>
<feature type="binding site" evidence="2">
    <location>
        <position position="351"/>
    </location>
    <ligand>
        <name>Mg(2+)</name>
        <dbReference type="ChEBI" id="CHEBI:18420"/>
    </ligand>
</feature>
<feature type="binding site" evidence="2">
    <location>
        <position position="453"/>
    </location>
    <ligand>
        <name>ATP</name>
        <dbReference type="ChEBI" id="CHEBI:30616"/>
        <note>allosteric activator</note>
    </ligand>
</feature>
<feature type="binding site" evidence="2">
    <location>
        <position position="456"/>
    </location>
    <ligand>
        <name>ATP</name>
        <dbReference type="ChEBI" id="CHEBI:30616"/>
        <note>allosteric activator</note>
    </ligand>
</feature>
<evidence type="ECO:0000250" key="1">
    <source>
        <dbReference type="UniProtKB" id="D3ZMY7"/>
    </source>
</evidence>
<evidence type="ECO:0000250" key="2">
    <source>
        <dbReference type="UniProtKB" id="P49902"/>
    </source>
</evidence>
<evidence type="ECO:0000256" key="3">
    <source>
        <dbReference type="SAM" id="MobiDB-lite"/>
    </source>
</evidence>
<evidence type="ECO:0000269" key="4">
    <source>
    </source>
</evidence>
<evidence type="ECO:0000305" key="5"/>
<evidence type="ECO:0000305" key="6">
    <source>
    </source>
</evidence>
<protein>
    <recommendedName>
        <fullName evidence="6">Cytosolic purine 5'-nucleotidase</fullName>
        <ecNumber evidence="4">3.1.3.5</ecNumber>
        <ecNumber evidence="4">3.1.3.99</ecNumber>
    </recommendedName>
    <alternativeName>
        <fullName evidence="2">Cytosolic nucleoside phosphotransferase 5'N</fullName>
        <ecNumber evidence="2">2.7.1.77</ecNumber>
    </alternativeName>
</protein>
<gene>
    <name type="primary">NT5C2</name>
    <name type="ORF">RCJMB04_22h21</name>
</gene>
<comment type="function">
    <text evidence="2 4">Broad specificity cytosolic 5'-nucleotidase that catalyzes the dephosphorylation of 6-hydroxypurine nucleoside 5'-monophosphates (PubMed:6060459). In addition, possesses a phosphotransferase activity by which it can transfer a phosphate from a donor nucleoside monophosphate to an acceptor nucleoside, preferably inosine, deoxyinosine and guanosine (By similarity). Has the highest activities for IMP and GMP followed by dIMP, dGMP and XMP (PubMed:6060459). Could also catalyze the transfer of phosphates from pyrimidine monophosphates but with lower efficiency (By similarity). Through these activities regulates the purine nucleoside/nucleotide pools within the cell (PubMed:6060459).</text>
</comment>
<comment type="catalytic activity">
    <reaction evidence="4">
        <text>a ribonucleoside 5'-phosphate + H2O = a ribonucleoside + phosphate</text>
        <dbReference type="Rhea" id="RHEA:12484"/>
        <dbReference type="ChEBI" id="CHEBI:15377"/>
        <dbReference type="ChEBI" id="CHEBI:18254"/>
        <dbReference type="ChEBI" id="CHEBI:43474"/>
        <dbReference type="ChEBI" id="CHEBI:58043"/>
        <dbReference type="EC" id="3.1.3.5"/>
    </reaction>
    <physiologicalReaction direction="left-to-right" evidence="6">
        <dbReference type="Rhea" id="RHEA:12485"/>
    </physiologicalReaction>
</comment>
<comment type="catalytic activity">
    <reaction evidence="2">
        <text>a 2'-deoxyribonucleoside + a ribonucleoside 5'-phosphate = a ribonucleoside + a 2'-deoxyribonucleoside 5'-phosphate</text>
        <dbReference type="Rhea" id="RHEA:19961"/>
        <dbReference type="ChEBI" id="CHEBI:18254"/>
        <dbReference type="ChEBI" id="CHEBI:18274"/>
        <dbReference type="ChEBI" id="CHEBI:58043"/>
        <dbReference type="ChEBI" id="CHEBI:65317"/>
        <dbReference type="EC" id="2.7.1.77"/>
    </reaction>
</comment>
<comment type="catalytic activity">
    <reaction evidence="4">
        <text>IMP + H2O = inosine + phosphate</text>
        <dbReference type="Rhea" id="RHEA:27718"/>
        <dbReference type="ChEBI" id="CHEBI:15377"/>
        <dbReference type="ChEBI" id="CHEBI:17596"/>
        <dbReference type="ChEBI" id="CHEBI:43474"/>
        <dbReference type="ChEBI" id="CHEBI:58053"/>
        <dbReference type="EC" id="3.1.3.99"/>
    </reaction>
    <physiologicalReaction direction="left-to-right" evidence="6">
        <dbReference type="Rhea" id="RHEA:27719"/>
    </physiologicalReaction>
</comment>
<comment type="catalytic activity">
    <reaction evidence="4">
        <text>GMP + H2O = guanosine + phosphate</text>
        <dbReference type="Rhea" id="RHEA:27714"/>
        <dbReference type="ChEBI" id="CHEBI:15377"/>
        <dbReference type="ChEBI" id="CHEBI:16750"/>
        <dbReference type="ChEBI" id="CHEBI:43474"/>
        <dbReference type="ChEBI" id="CHEBI:58115"/>
    </reaction>
    <physiologicalReaction direction="left-to-right" evidence="6">
        <dbReference type="Rhea" id="RHEA:27715"/>
    </physiologicalReaction>
</comment>
<comment type="catalytic activity">
    <reaction evidence="4">
        <text>dGMP + H2O = 2'-deoxyguanosine + phosphate</text>
        <dbReference type="Rhea" id="RHEA:29379"/>
        <dbReference type="ChEBI" id="CHEBI:15377"/>
        <dbReference type="ChEBI" id="CHEBI:17172"/>
        <dbReference type="ChEBI" id="CHEBI:43474"/>
        <dbReference type="ChEBI" id="CHEBI:57673"/>
    </reaction>
    <physiologicalReaction direction="left-to-right" evidence="6">
        <dbReference type="Rhea" id="RHEA:29380"/>
    </physiologicalReaction>
</comment>
<comment type="catalytic activity">
    <reaction evidence="1">
        <text>dIMP + H2O = 2'-deoxyinosine + phosphate</text>
        <dbReference type="Rhea" id="RHEA:29383"/>
        <dbReference type="ChEBI" id="CHEBI:15377"/>
        <dbReference type="ChEBI" id="CHEBI:28997"/>
        <dbReference type="ChEBI" id="CHEBI:43474"/>
        <dbReference type="ChEBI" id="CHEBI:61194"/>
    </reaction>
    <physiologicalReaction direction="left-to-right" evidence="1">
        <dbReference type="Rhea" id="RHEA:29384"/>
    </physiologicalReaction>
</comment>
<comment type="catalytic activity">
    <reaction evidence="4">
        <text>XMP + H2O = xanthosine + phosphate</text>
        <dbReference type="Rhea" id="RHEA:28530"/>
        <dbReference type="ChEBI" id="CHEBI:15377"/>
        <dbReference type="ChEBI" id="CHEBI:18107"/>
        <dbReference type="ChEBI" id="CHEBI:43474"/>
        <dbReference type="ChEBI" id="CHEBI:57464"/>
    </reaction>
    <physiologicalReaction direction="left-to-right" evidence="6">
        <dbReference type="Rhea" id="RHEA:28531"/>
    </physiologicalReaction>
</comment>
<comment type="catalytic activity">
    <reaction evidence="2">
        <text>inosine + GMP = guanosine + IMP</text>
        <dbReference type="Rhea" id="RHEA:69584"/>
        <dbReference type="ChEBI" id="CHEBI:16750"/>
        <dbReference type="ChEBI" id="CHEBI:17596"/>
        <dbReference type="ChEBI" id="CHEBI:58053"/>
        <dbReference type="ChEBI" id="CHEBI:58115"/>
    </reaction>
</comment>
<comment type="catalytic activity">
    <reaction evidence="2">
        <text>dGMP + inosine = 2'-deoxyguanosine + IMP</text>
        <dbReference type="Rhea" id="RHEA:69580"/>
        <dbReference type="ChEBI" id="CHEBI:17172"/>
        <dbReference type="ChEBI" id="CHEBI:17596"/>
        <dbReference type="ChEBI" id="CHEBI:57673"/>
        <dbReference type="ChEBI" id="CHEBI:58053"/>
    </reaction>
</comment>
<comment type="catalytic activity">
    <reaction evidence="2">
        <text>dIMP + inosine = 2'-deoxyinosine + IMP</text>
        <dbReference type="Rhea" id="RHEA:69572"/>
        <dbReference type="ChEBI" id="CHEBI:17596"/>
        <dbReference type="ChEBI" id="CHEBI:28997"/>
        <dbReference type="ChEBI" id="CHEBI:58053"/>
        <dbReference type="ChEBI" id="CHEBI:61194"/>
    </reaction>
</comment>
<comment type="catalytic activity">
    <reaction evidence="2">
        <text>inosine + UMP = uridine + IMP</text>
        <dbReference type="Rhea" id="RHEA:69588"/>
        <dbReference type="ChEBI" id="CHEBI:16704"/>
        <dbReference type="ChEBI" id="CHEBI:17596"/>
        <dbReference type="ChEBI" id="CHEBI:57865"/>
        <dbReference type="ChEBI" id="CHEBI:58053"/>
    </reaction>
</comment>
<comment type="catalytic activity">
    <reaction evidence="2">
        <text>inosine + CMP = cytidine + IMP</text>
        <dbReference type="Rhea" id="RHEA:69592"/>
        <dbReference type="ChEBI" id="CHEBI:17562"/>
        <dbReference type="ChEBI" id="CHEBI:17596"/>
        <dbReference type="ChEBI" id="CHEBI:58053"/>
        <dbReference type="ChEBI" id="CHEBI:60377"/>
    </reaction>
</comment>
<comment type="catalytic activity">
    <reaction evidence="2">
        <text>inosine + AMP = IMP + adenosine</text>
        <dbReference type="Rhea" id="RHEA:69596"/>
        <dbReference type="ChEBI" id="CHEBI:16335"/>
        <dbReference type="ChEBI" id="CHEBI:17596"/>
        <dbReference type="ChEBI" id="CHEBI:58053"/>
        <dbReference type="ChEBI" id="CHEBI:456215"/>
    </reaction>
</comment>
<comment type="cofactor">
    <cofactor evidence="4">
        <name>Mg(2+)</name>
        <dbReference type="ChEBI" id="CHEBI:18420"/>
    </cofactor>
    <text evidence="2">Binds 1 Mg(2+) ion per subunit.</text>
</comment>
<comment type="activity regulation">
    <text evidence="2 4">Allosterically activated by various compounds including ATP, 2,3-BPG/2,3-Bisphosphoglyceric acid and Ap4A/P1,P4-bis(5'-adenosyl) tetraphosphate. Binding of an allosteric activator is a prerequisiste to magnesium and substrate binding. Inhibited by inorganic phosphate (By similarity). Inhibited by inosine, guanosine, p-chloromercuribenzoate and NaF (PubMed:6060459).</text>
</comment>
<comment type="biophysicochemical properties">
    <kinetics>
        <KM evidence="4">0.8 mM for IMP</KM>
        <KM evidence="4">1.3 mM for GMP</KM>
    </kinetics>
    <phDependence>
        <text evidence="4">Optimum pH is 6.5.</text>
    </phDependence>
</comment>
<comment type="subunit">
    <text evidence="2">Homotetramer.</text>
</comment>
<comment type="subcellular location">
    <subcellularLocation>
        <location evidence="2">Cytoplasm</location>
        <location evidence="2">Cytosol</location>
    </subcellularLocation>
</comment>
<comment type="similarity">
    <text evidence="5">Belongs to the 5'(3')-deoxyribonucleotidase family.</text>
</comment>
<proteinExistence type="evidence at protein level"/>